<keyword id="KW-0378">Hydrolase</keyword>
<keyword id="KW-0460">Magnesium</keyword>
<keyword id="KW-0479">Metal-binding</keyword>
<keyword id="KW-0546">Nucleotide metabolism</keyword>
<keyword id="KW-1185">Reference proteome</keyword>
<evidence type="ECO:0000255" key="1">
    <source>
        <dbReference type="HAMAP-Rule" id="MF_00116"/>
    </source>
</evidence>
<dbReference type="EC" id="3.6.1.23" evidence="1"/>
<dbReference type="EMBL" id="CP000034">
    <property type="protein sequence ID" value="ABB63988.1"/>
    <property type="molecule type" value="Genomic_DNA"/>
</dbReference>
<dbReference type="RefSeq" id="YP_405479.1">
    <property type="nucleotide sequence ID" value="NC_007606.1"/>
</dbReference>
<dbReference type="SMR" id="Q329L7"/>
<dbReference type="STRING" id="300267.SDY_4070"/>
<dbReference type="EnsemblBacteria" id="ABB63988">
    <property type="protein sequence ID" value="ABB63988"/>
    <property type="gene ID" value="SDY_4070"/>
</dbReference>
<dbReference type="KEGG" id="sdy:SDY_4070"/>
<dbReference type="PATRIC" id="fig|300267.13.peg.4786"/>
<dbReference type="HOGENOM" id="CLU_068508_1_1_6"/>
<dbReference type="UniPathway" id="UPA00610">
    <property type="reaction ID" value="UER00666"/>
</dbReference>
<dbReference type="Proteomes" id="UP000002716">
    <property type="component" value="Chromosome"/>
</dbReference>
<dbReference type="GO" id="GO:0004170">
    <property type="term" value="F:dUTP diphosphatase activity"/>
    <property type="evidence" value="ECO:0007669"/>
    <property type="project" value="UniProtKB-UniRule"/>
</dbReference>
<dbReference type="GO" id="GO:0000287">
    <property type="term" value="F:magnesium ion binding"/>
    <property type="evidence" value="ECO:0007669"/>
    <property type="project" value="UniProtKB-UniRule"/>
</dbReference>
<dbReference type="GO" id="GO:0006226">
    <property type="term" value="P:dUMP biosynthetic process"/>
    <property type="evidence" value="ECO:0007669"/>
    <property type="project" value="UniProtKB-UniRule"/>
</dbReference>
<dbReference type="GO" id="GO:0046081">
    <property type="term" value="P:dUTP catabolic process"/>
    <property type="evidence" value="ECO:0007669"/>
    <property type="project" value="InterPro"/>
</dbReference>
<dbReference type="CDD" id="cd07557">
    <property type="entry name" value="trimeric_dUTPase"/>
    <property type="match status" value="1"/>
</dbReference>
<dbReference type="FunFam" id="2.70.40.10:FF:000002">
    <property type="entry name" value="dUTP diphosphatase"/>
    <property type="match status" value="1"/>
</dbReference>
<dbReference type="Gene3D" id="2.70.40.10">
    <property type="match status" value="1"/>
</dbReference>
<dbReference type="HAMAP" id="MF_00116">
    <property type="entry name" value="dUTPase_bact"/>
    <property type="match status" value="1"/>
</dbReference>
<dbReference type="InterPro" id="IPR008181">
    <property type="entry name" value="dUTPase"/>
</dbReference>
<dbReference type="InterPro" id="IPR029054">
    <property type="entry name" value="dUTPase-like"/>
</dbReference>
<dbReference type="InterPro" id="IPR036157">
    <property type="entry name" value="dUTPase-like_sf"/>
</dbReference>
<dbReference type="InterPro" id="IPR033704">
    <property type="entry name" value="dUTPase_trimeric"/>
</dbReference>
<dbReference type="NCBIfam" id="TIGR00576">
    <property type="entry name" value="dut"/>
    <property type="match status" value="1"/>
</dbReference>
<dbReference type="NCBIfam" id="NF001862">
    <property type="entry name" value="PRK00601.1"/>
    <property type="match status" value="1"/>
</dbReference>
<dbReference type="PANTHER" id="PTHR11241">
    <property type="entry name" value="DEOXYURIDINE 5'-TRIPHOSPHATE NUCLEOTIDOHYDROLASE"/>
    <property type="match status" value="1"/>
</dbReference>
<dbReference type="PANTHER" id="PTHR11241:SF0">
    <property type="entry name" value="DEOXYURIDINE 5'-TRIPHOSPHATE NUCLEOTIDOHYDROLASE"/>
    <property type="match status" value="1"/>
</dbReference>
<dbReference type="Pfam" id="PF00692">
    <property type="entry name" value="dUTPase"/>
    <property type="match status" value="1"/>
</dbReference>
<dbReference type="SUPFAM" id="SSF51283">
    <property type="entry name" value="dUTPase-like"/>
    <property type="match status" value="1"/>
</dbReference>
<proteinExistence type="inferred from homology"/>
<protein>
    <recommendedName>
        <fullName evidence="1">Deoxyuridine 5'-triphosphate nucleotidohydrolase</fullName>
        <shortName evidence="1">dUTPase</shortName>
        <ecNumber evidence="1">3.6.1.23</ecNumber>
    </recommendedName>
    <alternativeName>
        <fullName evidence="1">dUTP pyrophosphatase</fullName>
    </alternativeName>
</protein>
<sequence length="151" mass="16156">MKKIDVKILDPRVGKEFPLPTYATSGSAGLDLRACLDDAVELAPGDTTLVPTGLAIHIADPSLAAMMLPRSGLGHKHGIVLGNLVGLIDSDYQGQLMISVWNRGQDSFTIQPGERIAQMIFVPVVQAEFNLVEDFDATDRGEGGFGHSGRQ</sequence>
<accession>Q329L7</accession>
<name>DUT_SHIDS</name>
<comment type="function">
    <text evidence="1">This enzyme is involved in nucleotide metabolism: it produces dUMP, the immediate precursor of thymidine nucleotides and it decreases the intracellular concentration of dUTP so that uracil cannot be incorporated into DNA.</text>
</comment>
<comment type="catalytic activity">
    <reaction evidence="1">
        <text>dUTP + H2O = dUMP + diphosphate + H(+)</text>
        <dbReference type="Rhea" id="RHEA:10248"/>
        <dbReference type="ChEBI" id="CHEBI:15377"/>
        <dbReference type="ChEBI" id="CHEBI:15378"/>
        <dbReference type="ChEBI" id="CHEBI:33019"/>
        <dbReference type="ChEBI" id="CHEBI:61555"/>
        <dbReference type="ChEBI" id="CHEBI:246422"/>
        <dbReference type="EC" id="3.6.1.23"/>
    </reaction>
</comment>
<comment type="cofactor">
    <cofactor evidence="1">
        <name>Mg(2+)</name>
        <dbReference type="ChEBI" id="CHEBI:18420"/>
    </cofactor>
</comment>
<comment type="pathway">
    <text evidence="1">Pyrimidine metabolism; dUMP biosynthesis; dUMP from dCTP (dUTP route): step 2/2.</text>
</comment>
<comment type="similarity">
    <text evidence="1">Belongs to the dUTPase family.</text>
</comment>
<feature type="chain" id="PRO_0000231429" description="Deoxyuridine 5'-triphosphate nucleotidohydrolase">
    <location>
        <begin position="1"/>
        <end position="151"/>
    </location>
</feature>
<feature type="binding site" evidence="1">
    <location>
        <begin position="70"/>
        <end position="72"/>
    </location>
    <ligand>
        <name>substrate</name>
    </ligand>
</feature>
<feature type="binding site" evidence="1">
    <location>
        <position position="83"/>
    </location>
    <ligand>
        <name>substrate</name>
    </ligand>
</feature>
<feature type="binding site" evidence="1">
    <location>
        <begin position="87"/>
        <end position="89"/>
    </location>
    <ligand>
        <name>substrate</name>
    </ligand>
</feature>
<feature type="binding site" evidence="1">
    <location>
        <position position="97"/>
    </location>
    <ligand>
        <name>substrate</name>
    </ligand>
</feature>
<organism>
    <name type="scientific">Shigella dysenteriae serotype 1 (strain Sd197)</name>
    <dbReference type="NCBI Taxonomy" id="300267"/>
    <lineage>
        <taxon>Bacteria</taxon>
        <taxon>Pseudomonadati</taxon>
        <taxon>Pseudomonadota</taxon>
        <taxon>Gammaproteobacteria</taxon>
        <taxon>Enterobacterales</taxon>
        <taxon>Enterobacteriaceae</taxon>
        <taxon>Shigella</taxon>
    </lineage>
</organism>
<reference key="1">
    <citation type="journal article" date="2005" name="Nucleic Acids Res.">
        <title>Genome dynamics and diversity of Shigella species, the etiologic agents of bacillary dysentery.</title>
        <authorList>
            <person name="Yang F."/>
            <person name="Yang J."/>
            <person name="Zhang X."/>
            <person name="Chen L."/>
            <person name="Jiang Y."/>
            <person name="Yan Y."/>
            <person name="Tang X."/>
            <person name="Wang J."/>
            <person name="Xiong Z."/>
            <person name="Dong J."/>
            <person name="Xue Y."/>
            <person name="Zhu Y."/>
            <person name="Xu X."/>
            <person name="Sun L."/>
            <person name="Chen S."/>
            <person name="Nie H."/>
            <person name="Peng J."/>
            <person name="Xu J."/>
            <person name="Wang Y."/>
            <person name="Yuan Z."/>
            <person name="Wen Y."/>
            <person name="Yao Z."/>
            <person name="Shen Y."/>
            <person name="Qiang B."/>
            <person name="Hou Y."/>
            <person name="Yu J."/>
            <person name="Jin Q."/>
        </authorList>
    </citation>
    <scope>NUCLEOTIDE SEQUENCE [LARGE SCALE GENOMIC DNA]</scope>
    <source>
        <strain>Sd197</strain>
    </source>
</reference>
<gene>
    <name evidence="1" type="primary">dut</name>
    <name type="ordered locus">SDY_4070</name>
</gene>